<sequence>MRAKTTSRHHNVDEQEIAKFEAVASRWWDLEGEFKPLHRINPLRLNYILQRSGGIFEKKVLDVGCGGGILAESMAREGAQVTGLDMGYEPLQVARLHALETGVKLEYVQETVENHAQQHPQHYDVVTCMEMLEHVPDPASVVRACAQLVKPGGHVFFSTINRNTKSWLMAVVGAEYLLKMVPKGTHDAKKFIRPSELIGWVDQTPLLERHIIGLHYNPITDHFKLGRNVDVNYMVHTQRDSE</sequence>
<name>UBIG_YERPY</name>
<protein>
    <recommendedName>
        <fullName evidence="1">Ubiquinone biosynthesis O-methyltransferase</fullName>
    </recommendedName>
    <alternativeName>
        <fullName evidence="1">2-polyprenyl-6-hydroxyphenol methylase</fullName>
        <ecNumber evidence="1">2.1.1.222</ecNumber>
    </alternativeName>
    <alternativeName>
        <fullName evidence="1">3-demethylubiquinone 3-O-methyltransferase</fullName>
        <ecNumber evidence="1">2.1.1.64</ecNumber>
    </alternativeName>
</protein>
<evidence type="ECO:0000255" key="1">
    <source>
        <dbReference type="HAMAP-Rule" id="MF_00472"/>
    </source>
</evidence>
<accession>B1JS96</accession>
<feature type="chain" id="PRO_1000199711" description="Ubiquinone biosynthesis O-methyltransferase">
    <location>
        <begin position="1"/>
        <end position="242"/>
    </location>
</feature>
<feature type="binding site" evidence="1">
    <location>
        <position position="44"/>
    </location>
    <ligand>
        <name>S-adenosyl-L-methionine</name>
        <dbReference type="ChEBI" id="CHEBI:59789"/>
    </ligand>
</feature>
<feature type="binding site" evidence="1">
    <location>
        <position position="64"/>
    </location>
    <ligand>
        <name>S-adenosyl-L-methionine</name>
        <dbReference type="ChEBI" id="CHEBI:59789"/>
    </ligand>
</feature>
<feature type="binding site" evidence="1">
    <location>
        <position position="85"/>
    </location>
    <ligand>
        <name>S-adenosyl-L-methionine</name>
        <dbReference type="ChEBI" id="CHEBI:59789"/>
    </ligand>
</feature>
<feature type="binding site" evidence="1">
    <location>
        <position position="129"/>
    </location>
    <ligand>
        <name>S-adenosyl-L-methionine</name>
        <dbReference type="ChEBI" id="CHEBI:59789"/>
    </ligand>
</feature>
<comment type="function">
    <text evidence="1">O-methyltransferase that catalyzes the 2 O-methylation steps in the ubiquinone biosynthetic pathway.</text>
</comment>
<comment type="catalytic activity">
    <reaction evidence="1">
        <text>a 3-demethylubiquinol + S-adenosyl-L-methionine = a ubiquinol + S-adenosyl-L-homocysteine + H(+)</text>
        <dbReference type="Rhea" id="RHEA:44380"/>
        <dbReference type="Rhea" id="RHEA-COMP:9566"/>
        <dbReference type="Rhea" id="RHEA-COMP:10914"/>
        <dbReference type="ChEBI" id="CHEBI:15378"/>
        <dbReference type="ChEBI" id="CHEBI:17976"/>
        <dbReference type="ChEBI" id="CHEBI:57856"/>
        <dbReference type="ChEBI" id="CHEBI:59789"/>
        <dbReference type="ChEBI" id="CHEBI:84422"/>
        <dbReference type="EC" id="2.1.1.64"/>
    </reaction>
</comment>
<comment type="catalytic activity">
    <reaction evidence="1">
        <text>a 3-(all-trans-polyprenyl)benzene-1,2-diol + S-adenosyl-L-methionine = a 2-methoxy-6-(all-trans-polyprenyl)phenol + S-adenosyl-L-homocysteine + H(+)</text>
        <dbReference type="Rhea" id="RHEA:31411"/>
        <dbReference type="Rhea" id="RHEA-COMP:9550"/>
        <dbReference type="Rhea" id="RHEA-COMP:9551"/>
        <dbReference type="ChEBI" id="CHEBI:15378"/>
        <dbReference type="ChEBI" id="CHEBI:57856"/>
        <dbReference type="ChEBI" id="CHEBI:59789"/>
        <dbReference type="ChEBI" id="CHEBI:62729"/>
        <dbReference type="ChEBI" id="CHEBI:62731"/>
        <dbReference type="EC" id="2.1.1.222"/>
    </reaction>
</comment>
<comment type="pathway">
    <text evidence="1">Cofactor biosynthesis; ubiquinone biosynthesis.</text>
</comment>
<comment type="similarity">
    <text evidence="1">Belongs to the methyltransferase superfamily. UbiG/COQ3 family.</text>
</comment>
<proteinExistence type="inferred from homology"/>
<keyword id="KW-0489">Methyltransferase</keyword>
<keyword id="KW-0949">S-adenosyl-L-methionine</keyword>
<keyword id="KW-0808">Transferase</keyword>
<keyword id="KW-0831">Ubiquinone biosynthesis</keyword>
<reference key="1">
    <citation type="submission" date="2008-02" db="EMBL/GenBank/DDBJ databases">
        <title>Complete sequence of Yersinia pseudotuberculosis YPIII.</title>
        <authorList>
            <consortium name="US DOE Joint Genome Institute"/>
            <person name="Copeland A."/>
            <person name="Lucas S."/>
            <person name="Lapidus A."/>
            <person name="Glavina del Rio T."/>
            <person name="Dalin E."/>
            <person name="Tice H."/>
            <person name="Bruce D."/>
            <person name="Goodwin L."/>
            <person name="Pitluck S."/>
            <person name="Munk A.C."/>
            <person name="Brettin T."/>
            <person name="Detter J.C."/>
            <person name="Han C."/>
            <person name="Tapia R."/>
            <person name="Schmutz J."/>
            <person name="Larimer F."/>
            <person name="Land M."/>
            <person name="Hauser L."/>
            <person name="Challacombe J.F."/>
            <person name="Green L."/>
            <person name="Lindler L.E."/>
            <person name="Nikolich M.P."/>
            <person name="Richardson P."/>
        </authorList>
    </citation>
    <scope>NUCLEOTIDE SEQUENCE [LARGE SCALE GENOMIC DNA]</scope>
    <source>
        <strain>YPIII</strain>
    </source>
</reference>
<organism>
    <name type="scientific">Yersinia pseudotuberculosis serotype O:3 (strain YPIII)</name>
    <dbReference type="NCBI Taxonomy" id="502800"/>
    <lineage>
        <taxon>Bacteria</taxon>
        <taxon>Pseudomonadati</taxon>
        <taxon>Pseudomonadota</taxon>
        <taxon>Gammaproteobacteria</taxon>
        <taxon>Enterobacterales</taxon>
        <taxon>Yersiniaceae</taxon>
        <taxon>Yersinia</taxon>
    </lineage>
</organism>
<dbReference type="EC" id="2.1.1.222" evidence="1"/>
<dbReference type="EC" id="2.1.1.64" evidence="1"/>
<dbReference type="EMBL" id="CP000950">
    <property type="protein sequence ID" value="ACA69123.1"/>
    <property type="molecule type" value="Genomic_DNA"/>
</dbReference>
<dbReference type="RefSeq" id="WP_002210820.1">
    <property type="nucleotide sequence ID" value="NZ_CP009792.1"/>
</dbReference>
<dbReference type="SMR" id="B1JS96"/>
<dbReference type="GeneID" id="57977354"/>
<dbReference type="KEGG" id="ypy:YPK_2847"/>
<dbReference type="PATRIC" id="fig|502800.11.peg.3562"/>
<dbReference type="UniPathway" id="UPA00232"/>
<dbReference type="GO" id="GO:0102208">
    <property type="term" value="F:2-polyprenyl-6-hydroxyphenol methylase activity"/>
    <property type="evidence" value="ECO:0007669"/>
    <property type="project" value="UniProtKB-EC"/>
</dbReference>
<dbReference type="GO" id="GO:0061542">
    <property type="term" value="F:3-demethylubiquinol 3-O-methyltransferase activity"/>
    <property type="evidence" value="ECO:0007669"/>
    <property type="project" value="UniProtKB-UniRule"/>
</dbReference>
<dbReference type="GO" id="GO:0010420">
    <property type="term" value="F:polyprenyldihydroxybenzoate methyltransferase activity"/>
    <property type="evidence" value="ECO:0007669"/>
    <property type="project" value="InterPro"/>
</dbReference>
<dbReference type="GO" id="GO:0032259">
    <property type="term" value="P:methylation"/>
    <property type="evidence" value="ECO:0007669"/>
    <property type="project" value="UniProtKB-KW"/>
</dbReference>
<dbReference type="CDD" id="cd02440">
    <property type="entry name" value="AdoMet_MTases"/>
    <property type="match status" value="1"/>
</dbReference>
<dbReference type="FunFam" id="3.40.50.150:FF:000028">
    <property type="entry name" value="Ubiquinone biosynthesis O-methyltransferase"/>
    <property type="match status" value="1"/>
</dbReference>
<dbReference type="Gene3D" id="3.40.50.150">
    <property type="entry name" value="Vaccinia Virus protein VP39"/>
    <property type="match status" value="1"/>
</dbReference>
<dbReference type="HAMAP" id="MF_00472">
    <property type="entry name" value="UbiG"/>
    <property type="match status" value="1"/>
</dbReference>
<dbReference type="InterPro" id="IPR029063">
    <property type="entry name" value="SAM-dependent_MTases_sf"/>
</dbReference>
<dbReference type="InterPro" id="IPR010233">
    <property type="entry name" value="UbiG_MeTrfase"/>
</dbReference>
<dbReference type="NCBIfam" id="TIGR01983">
    <property type="entry name" value="UbiG"/>
    <property type="match status" value="1"/>
</dbReference>
<dbReference type="PANTHER" id="PTHR43464">
    <property type="entry name" value="METHYLTRANSFERASE"/>
    <property type="match status" value="1"/>
</dbReference>
<dbReference type="PANTHER" id="PTHR43464:SF19">
    <property type="entry name" value="UBIQUINONE BIOSYNTHESIS O-METHYLTRANSFERASE, MITOCHONDRIAL"/>
    <property type="match status" value="1"/>
</dbReference>
<dbReference type="Pfam" id="PF13489">
    <property type="entry name" value="Methyltransf_23"/>
    <property type="match status" value="1"/>
</dbReference>
<dbReference type="SUPFAM" id="SSF53335">
    <property type="entry name" value="S-adenosyl-L-methionine-dependent methyltransferases"/>
    <property type="match status" value="1"/>
</dbReference>
<gene>
    <name evidence="1" type="primary">ubiG</name>
    <name type="ordered locus">YPK_2847</name>
</gene>